<sequence>MADITDKTAEQLENLNIQDDQKQAATGSESQSVENSSASLYVGDLEPSVSEAHLYDIFSPIGSVSSIRVCRDAITKTSLGYAYVNFNDHEAGRKAIEQLNYTPIKGRLCRIMWSQRDPSLRKKGSGNIFIKNLHPDIDNKALYDTFSVFGDILSSKIATDENGKSKGFGFVHFEEEGAAKEAIDALNGMLLNGQEIYVAPHLSRKERDSQLEETKAHYTNLYVKNINSETTDEQFQELFAKFGPIVSASLEKDADGKLKGFGFVNYEKHEDAVKAVEALNDSELNGEKLYVGRAQKKNERMHVLKKQYEAYRLEKMAKYQGVNLFVKNLDDSVDDEKLEEEFAPYGTITSAKVMRTENGKSKGFGFVCFSTPEEATKAITEKNQQIVAGKPLYVAIAQRKDVRRSQLAQQIQARNQMRYQQATAAAAAAAAGMPGQFMPPMFYGVMPPRGVPFNGPNPQQMNPMGGMPKNGMPPQFRNGPVYGVPPQGGFPRNANDNNQFYQQKQRQALGEQLYKKVSAKTSNEEAAGKITGMILDLPPQEVFPLLESDELFEQHYKEASAAYESFKKEQEQQTEQA</sequence>
<name>PABP_YEAST</name>
<dbReference type="EMBL" id="M12780">
    <property type="protein sequence ID" value="AAA34838.1"/>
    <property type="molecule type" value="Genomic_DNA"/>
</dbReference>
<dbReference type="EMBL" id="M13371">
    <property type="protein sequence ID" value="AAA34787.1"/>
    <property type="molecule type" value="Genomic_DNA"/>
</dbReference>
<dbReference type="EMBL" id="D00023">
    <property type="protein sequence ID" value="BAA00017.1"/>
    <property type="molecule type" value="Genomic_DNA"/>
</dbReference>
<dbReference type="EMBL" id="U18922">
    <property type="protein sequence ID" value="AAB64692.1"/>
    <property type="molecule type" value="Genomic_DNA"/>
</dbReference>
<dbReference type="EMBL" id="AY692854">
    <property type="protein sequence ID" value="AAT92873.1"/>
    <property type="molecule type" value="Genomic_DNA"/>
</dbReference>
<dbReference type="EMBL" id="BK006939">
    <property type="protein sequence ID" value="DAA07827.1"/>
    <property type="molecule type" value="Genomic_DNA"/>
</dbReference>
<dbReference type="PIR" id="A25221">
    <property type="entry name" value="DNBYPA"/>
</dbReference>
<dbReference type="RefSeq" id="NP_011092.1">
    <property type="nucleotide sequence ID" value="NM_001179055.1"/>
</dbReference>
<dbReference type="PDB" id="1IFW">
    <property type="method" value="NMR"/>
    <property type="chains" value="A=491-577"/>
</dbReference>
<dbReference type="PDB" id="6R5K">
    <property type="method" value="EM"/>
    <property type="resolution" value="4.80 A"/>
    <property type="chains" value="D/F/H=1-577"/>
</dbReference>
<dbReference type="PDBsum" id="1IFW"/>
<dbReference type="PDBsum" id="6R5K"/>
<dbReference type="BMRB" id="P04147"/>
<dbReference type="EMDB" id="EMD-4728"/>
<dbReference type="SMR" id="P04147"/>
<dbReference type="BioGRID" id="36918">
    <property type="interactions" value="741"/>
</dbReference>
<dbReference type="DIP" id="DIP-2275N"/>
<dbReference type="FunCoup" id="P04147">
    <property type="interactions" value="1756"/>
</dbReference>
<dbReference type="IntAct" id="P04147">
    <property type="interactions" value="247"/>
</dbReference>
<dbReference type="MINT" id="P04147"/>
<dbReference type="STRING" id="4932.YER165W"/>
<dbReference type="iPTMnet" id="P04147"/>
<dbReference type="PaxDb" id="4932-YER165W"/>
<dbReference type="PeptideAtlas" id="P04147"/>
<dbReference type="EnsemblFungi" id="YER165W_mRNA">
    <property type="protein sequence ID" value="YER165W"/>
    <property type="gene ID" value="YER165W"/>
</dbReference>
<dbReference type="GeneID" id="856912"/>
<dbReference type="KEGG" id="sce:YER165W"/>
<dbReference type="AGR" id="SGD:S000000967"/>
<dbReference type="SGD" id="S000000967">
    <property type="gene designation" value="PAB1"/>
</dbReference>
<dbReference type="VEuPathDB" id="FungiDB:YER165W"/>
<dbReference type="eggNOG" id="KOG0123">
    <property type="taxonomic scope" value="Eukaryota"/>
</dbReference>
<dbReference type="GeneTree" id="ENSGT00940000169027"/>
<dbReference type="HOGENOM" id="CLU_012062_22_4_1"/>
<dbReference type="InParanoid" id="P04147"/>
<dbReference type="OMA" id="NATYSMA"/>
<dbReference type="OrthoDB" id="19742at2759"/>
<dbReference type="BioCyc" id="YEAST:G3O-30326-MONOMER"/>
<dbReference type="BioGRID-ORCS" id="856912">
    <property type="hits" value="6 hits in 10 CRISPR screens"/>
</dbReference>
<dbReference type="CD-CODE" id="6E49930B">
    <property type="entry name" value="Synthetic Condensate 000065"/>
</dbReference>
<dbReference type="CD-CODE" id="A777E0F8">
    <property type="entry name" value="P-body"/>
</dbReference>
<dbReference type="CD-CODE" id="E03F929F">
    <property type="entry name" value="Stress granule"/>
</dbReference>
<dbReference type="EvolutionaryTrace" id="P04147"/>
<dbReference type="PRO" id="PR:P04147"/>
<dbReference type="Proteomes" id="UP000002311">
    <property type="component" value="Chromosome V"/>
</dbReference>
<dbReference type="RNAct" id="P04147">
    <property type="molecule type" value="protein"/>
</dbReference>
<dbReference type="GO" id="GO:0005737">
    <property type="term" value="C:cytoplasm"/>
    <property type="evidence" value="ECO:0000314"/>
    <property type="project" value="SGD"/>
</dbReference>
<dbReference type="GO" id="GO:0010494">
    <property type="term" value="C:cytoplasmic stress granule"/>
    <property type="evidence" value="ECO:0000314"/>
    <property type="project" value="SGD"/>
</dbReference>
<dbReference type="GO" id="GO:0005829">
    <property type="term" value="C:cytosol"/>
    <property type="evidence" value="ECO:0000318"/>
    <property type="project" value="GO_Central"/>
</dbReference>
<dbReference type="GO" id="GO:0043232">
    <property type="term" value="C:intracellular membraneless organelle"/>
    <property type="evidence" value="ECO:0000314"/>
    <property type="project" value="DisProt"/>
</dbReference>
<dbReference type="GO" id="GO:0005634">
    <property type="term" value="C:nucleus"/>
    <property type="evidence" value="ECO:0000314"/>
    <property type="project" value="SGD"/>
</dbReference>
<dbReference type="GO" id="GO:1990904">
    <property type="term" value="C:ribonucleoprotein complex"/>
    <property type="evidence" value="ECO:0000318"/>
    <property type="project" value="GO_Central"/>
</dbReference>
<dbReference type="GO" id="GO:0005840">
    <property type="term" value="C:ribosome"/>
    <property type="evidence" value="ECO:0000314"/>
    <property type="project" value="SGD"/>
</dbReference>
<dbReference type="GO" id="GO:0140693">
    <property type="term" value="F:molecular condensate scaffold activity"/>
    <property type="evidence" value="ECO:0000314"/>
    <property type="project" value="DisProt"/>
</dbReference>
<dbReference type="GO" id="GO:0003730">
    <property type="term" value="F:mRNA 3'-UTR binding"/>
    <property type="evidence" value="ECO:0000318"/>
    <property type="project" value="GO_Central"/>
</dbReference>
<dbReference type="GO" id="GO:0003729">
    <property type="term" value="F:mRNA binding"/>
    <property type="evidence" value="ECO:0007005"/>
    <property type="project" value="SGD"/>
</dbReference>
<dbReference type="GO" id="GO:0008143">
    <property type="term" value="F:poly(A) binding"/>
    <property type="evidence" value="ECO:0000314"/>
    <property type="project" value="SGD"/>
</dbReference>
<dbReference type="GO" id="GO:0008266">
    <property type="term" value="F:poly(U) RNA binding"/>
    <property type="evidence" value="ECO:0000318"/>
    <property type="project" value="GO_Central"/>
</dbReference>
<dbReference type="GO" id="GO:1990841">
    <property type="term" value="F:promoter-specific chromatin binding"/>
    <property type="evidence" value="ECO:0000314"/>
    <property type="project" value="SGD"/>
</dbReference>
<dbReference type="GO" id="GO:0008428">
    <property type="term" value="F:ribonuclease inhibitor activity"/>
    <property type="evidence" value="ECO:0000314"/>
    <property type="project" value="SGD"/>
</dbReference>
<dbReference type="GO" id="GO:0031124">
    <property type="term" value="P:mRNA 3'-end processing"/>
    <property type="evidence" value="ECO:0000315"/>
    <property type="project" value="SGD"/>
</dbReference>
<dbReference type="GO" id="GO:0051028">
    <property type="term" value="P:mRNA transport"/>
    <property type="evidence" value="ECO:0007669"/>
    <property type="project" value="UniProtKB-KW"/>
</dbReference>
<dbReference type="GO" id="GO:0060211">
    <property type="term" value="P:regulation of nuclear-transcribed mRNA poly(A) tail shortening"/>
    <property type="evidence" value="ECO:0000314"/>
    <property type="project" value="SGD"/>
</dbReference>
<dbReference type="GO" id="GO:0006446">
    <property type="term" value="P:regulation of translational initiation"/>
    <property type="evidence" value="ECO:0000314"/>
    <property type="project" value="SGD"/>
</dbReference>
<dbReference type="CDD" id="cd12378">
    <property type="entry name" value="RRM1_I_PABPs"/>
    <property type="match status" value="1"/>
</dbReference>
<dbReference type="CDD" id="cd12379">
    <property type="entry name" value="RRM2_I_PABPs"/>
    <property type="match status" value="1"/>
</dbReference>
<dbReference type="CDD" id="cd12380">
    <property type="entry name" value="RRM3_I_PABPs"/>
    <property type="match status" value="1"/>
</dbReference>
<dbReference type="CDD" id="cd12381">
    <property type="entry name" value="RRM4_I_PABPs"/>
    <property type="match status" value="1"/>
</dbReference>
<dbReference type="DisProt" id="DP01538"/>
<dbReference type="FunFam" id="1.10.1900.10:FF:000008">
    <property type="entry name" value="Polyadenylate-binding protein"/>
    <property type="match status" value="1"/>
</dbReference>
<dbReference type="FunFam" id="3.30.70.330:FF:000003">
    <property type="entry name" value="Polyadenylate-binding protein"/>
    <property type="match status" value="1"/>
</dbReference>
<dbReference type="FunFam" id="3.30.70.330:FF:000211">
    <property type="entry name" value="Polyadenylate-binding protein"/>
    <property type="match status" value="1"/>
</dbReference>
<dbReference type="FunFam" id="3.30.70.330:FF:000355">
    <property type="entry name" value="Polyadenylate-binding protein"/>
    <property type="match status" value="1"/>
</dbReference>
<dbReference type="FunFam" id="3.30.70.330:FF:000520">
    <property type="entry name" value="Polyadenylate-binding protein"/>
    <property type="match status" value="1"/>
</dbReference>
<dbReference type="Gene3D" id="3.30.70.330">
    <property type="match status" value="4"/>
</dbReference>
<dbReference type="Gene3D" id="1.10.1900.10">
    <property type="entry name" value="c-terminal domain of poly(a) binding protein"/>
    <property type="match status" value="1"/>
</dbReference>
<dbReference type="InterPro" id="IPR012677">
    <property type="entry name" value="Nucleotide-bd_a/b_plait_sf"/>
</dbReference>
<dbReference type="InterPro" id="IPR036053">
    <property type="entry name" value="PABP-dom"/>
</dbReference>
<dbReference type="InterPro" id="IPR006515">
    <property type="entry name" value="PABP_1234"/>
</dbReference>
<dbReference type="InterPro" id="IPR002004">
    <property type="entry name" value="PABP_HYD_C"/>
</dbReference>
<dbReference type="InterPro" id="IPR034364">
    <property type="entry name" value="PABP_RRM1"/>
</dbReference>
<dbReference type="InterPro" id="IPR035979">
    <property type="entry name" value="RBD_domain_sf"/>
</dbReference>
<dbReference type="InterPro" id="IPR045305">
    <property type="entry name" value="RRM2_I_PABPs"/>
</dbReference>
<dbReference type="InterPro" id="IPR000504">
    <property type="entry name" value="RRM_dom"/>
</dbReference>
<dbReference type="InterPro" id="IPR003954">
    <property type="entry name" value="RRM_dom_euk"/>
</dbReference>
<dbReference type="NCBIfam" id="TIGR01628">
    <property type="entry name" value="PABP-1234"/>
    <property type="match status" value="1"/>
</dbReference>
<dbReference type="PANTHER" id="PTHR24012">
    <property type="entry name" value="RNA BINDING PROTEIN"/>
    <property type="match status" value="1"/>
</dbReference>
<dbReference type="Pfam" id="PF00658">
    <property type="entry name" value="MLLE"/>
    <property type="match status" value="1"/>
</dbReference>
<dbReference type="Pfam" id="PF00076">
    <property type="entry name" value="RRM_1"/>
    <property type="match status" value="4"/>
</dbReference>
<dbReference type="SMART" id="SM00517">
    <property type="entry name" value="PolyA"/>
    <property type="match status" value="1"/>
</dbReference>
<dbReference type="SMART" id="SM00360">
    <property type="entry name" value="RRM"/>
    <property type="match status" value="4"/>
</dbReference>
<dbReference type="SMART" id="SM00361">
    <property type="entry name" value="RRM_1"/>
    <property type="match status" value="4"/>
</dbReference>
<dbReference type="SUPFAM" id="SSF63570">
    <property type="entry name" value="PABC (PABP) domain"/>
    <property type="match status" value="1"/>
</dbReference>
<dbReference type="SUPFAM" id="SSF54928">
    <property type="entry name" value="RNA-binding domain, RBD"/>
    <property type="match status" value="2"/>
</dbReference>
<dbReference type="PROSITE" id="PS51309">
    <property type="entry name" value="PABC"/>
    <property type="match status" value="1"/>
</dbReference>
<dbReference type="PROSITE" id="PS50102">
    <property type="entry name" value="RRM"/>
    <property type="match status" value="4"/>
</dbReference>
<organism>
    <name type="scientific">Saccharomyces cerevisiae (strain ATCC 204508 / S288c)</name>
    <name type="common">Baker's yeast</name>
    <dbReference type="NCBI Taxonomy" id="559292"/>
    <lineage>
        <taxon>Eukaryota</taxon>
        <taxon>Fungi</taxon>
        <taxon>Dikarya</taxon>
        <taxon>Ascomycota</taxon>
        <taxon>Saccharomycotina</taxon>
        <taxon>Saccharomycetes</taxon>
        <taxon>Saccharomycetales</taxon>
        <taxon>Saccharomycetaceae</taxon>
        <taxon>Saccharomyces</taxon>
    </lineage>
</organism>
<gene>
    <name type="primary">PAB1</name>
    <name type="ordered locus">YER165W</name>
</gene>
<proteinExistence type="evidence at protein level"/>
<protein>
    <recommendedName>
        <fullName>Polyadenylate-binding protein, cytoplasmic and nuclear</fullName>
        <shortName>PABP</shortName>
        <shortName>Poly(A)-binding protein</shortName>
    </recommendedName>
    <alternativeName>
        <fullName>ARS consensus-binding protein ACBP-67</fullName>
    </alternativeName>
    <alternativeName>
        <fullName>Polyadenylate tail-binding protein</fullName>
    </alternativeName>
</protein>
<accession>P04147</accession>
<accession>D3DM73</accession>
<reference key="1">
    <citation type="journal article" date="1986" name="Cell">
        <title>A single gene from yeast for both nuclear and cytoplasmic polyadenylate-binding proteins: domain structure and expression.</title>
        <authorList>
            <person name="Sachs A.B."/>
            <person name="Bond M.W."/>
            <person name="Kornberg R.D."/>
        </authorList>
    </citation>
    <scope>NUCLEOTIDE SEQUENCE [GENOMIC DNA]</scope>
    <scope>PROTEIN SEQUENCE OF 9-29</scope>
</reference>
<reference key="2">
    <citation type="journal article" date="1986" name="Mol. Cell. Biol.">
        <title>mRNA polyadenylate-binding protein: gene isolation and sequencing and identification of a ribonucleoprotein consensus sequence.</title>
        <authorList>
            <person name="Adam S.A."/>
            <person name="Nakagawa T."/>
            <person name="Swanson M.S."/>
            <person name="Woodruff T.K."/>
            <person name="Dreyfuss G."/>
        </authorList>
    </citation>
    <scope>NUCLEOTIDE SEQUENCE [GENOMIC DNA]</scope>
    <scope>SUBCELLULAR LOCATION</scope>
</reference>
<reference key="3">
    <citation type="journal article" date="1997" name="Nature">
        <title>The nucleotide sequence of Saccharomyces cerevisiae chromosome V.</title>
        <authorList>
            <person name="Dietrich F.S."/>
            <person name="Mulligan J.T."/>
            <person name="Hennessy K.M."/>
            <person name="Yelton M.A."/>
            <person name="Allen E."/>
            <person name="Araujo R."/>
            <person name="Aviles E."/>
            <person name="Berno A."/>
            <person name="Brennan T."/>
            <person name="Carpenter J."/>
            <person name="Chen E."/>
            <person name="Cherry J.M."/>
            <person name="Chung E."/>
            <person name="Duncan M."/>
            <person name="Guzman E."/>
            <person name="Hartzell G."/>
            <person name="Hunicke-Smith S."/>
            <person name="Hyman R.W."/>
            <person name="Kayser A."/>
            <person name="Komp C."/>
            <person name="Lashkari D."/>
            <person name="Lew H."/>
            <person name="Lin D."/>
            <person name="Mosedale D."/>
            <person name="Nakahara K."/>
            <person name="Namath A."/>
            <person name="Norgren R."/>
            <person name="Oefner P."/>
            <person name="Oh C."/>
            <person name="Petel F.X."/>
            <person name="Roberts D."/>
            <person name="Sehl P."/>
            <person name="Schramm S."/>
            <person name="Shogren T."/>
            <person name="Smith V."/>
            <person name="Taylor P."/>
            <person name="Wei Y."/>
            <person name="Botstein D."/>
            <person name="Davis R.W."/>
        </authorList>
    </citation>
    <scope>NUCLEOTIDE SEQUENCE [LARGE SCALE GENOMIC DNA]</scope>
    <source>
        <strain>ATCC 204508 / S288c</strain>
    </source>
</reference>
<reference key="4">
    <citation type="journal article" date="2014" name="G3 (Bethesda)">
        <title>The reference genome sequence of Saccharomyces cerevisiae: Then and now.</title>
        <authorList>
            <person name="Engel S.R."/>
            <person name="Dietrich F.S."/>
            <person name="Fisk D.G."/>
            <person name="Binkley G."/>
            <person name="Balakrishnan R."/>
            <person name="Costanzo M.C."/>
            <person name="Dwight S.S."/>
            <person name="Hitz B.C."/>
            <person name="Karra K."/>
            <person name="Nash R.S."/>
            <person name="Weng S."/>
            <person name="Wong E.D."/>
            <person name="Lloyd P."/>
            <person name="Skrzypek M.S."/>
            <person name="Miyasato S.R."/>
            <person name="Simison M."/>
            <person name="Cherry J.M."/>
        </authorList>
    </citation>
    <scope>GENOME REANNOTATION</scope>
    <source>
        <strain>ATCC 204508 / S288c</strain>
    </source>
</reference>
<reference key="5">
    <citation type="journal article" date="2007" name="Genome Res.">
        <title>Approaching a complete repository of sequence-verified protein-encoding clones for Saccharomyces cerevisiae.</title>
        <authorList>
            <person name="Hu Y."/>
            <person name="Rolfs A."/>
            <person name="Bhullar B."/>
            <person name="Murthy T.V.S."/>
            <person name="Zhu C."/>
            <person name="Berger M.F."/>
            <person name="Camargo A.A."/>
            <person name="Kelley F."/>
            <person name="McCarron S."/>
            <person name="Jepson D."/>
            <person name="Richardson A."/>
            <person name="Raphael J."/>
            <person name="Moreira D."/>
            <person name="Taycher E."/>
            <person name="Zuo D."/>
            <person name="Mohr S."/>
            <person name="Kane M.F."/>
            <person name="Williamson J."/>
            <person name="Simpson A.J.G."/>
            <person name="Bulyk M.L."/>
            <person name="Harlow E."/>
            <person name="Marsischky G."/>
            <person name="Kolodner R.D."/>
            <person name="LaBaer J."/>
        </authorList>
    </citation>
    <scope>NUCLEOTIDE SEQUENCE [GENOMIC DNA]</scope>
    <source>
        <strain>ATCC 204508 / S288c</strain>
    </source>
</reference>
<reference key="6">
    <citation type="journal article" date="1994" name="Nucleic Acids Res.">
        <title>The yeast protein encoded by PUB1 binds T-rich single stranded DNA.</title>
        <authorList>
            <person name="Cockell M."/>
            <person name="Frutiger S."/>
            <person name="Hughes G.J."/>
            <person name="Gasser S.M."/>
        </authorList>
    </citation>
    <scope>PROTEIN SEQUENCE OF 8-17; 167-173 AND 242-248</scope>
    <scope>CHARACTERIZATION</scope>
</reference>
<reference key="7">
    <citation type="journal article" date="1987" name="Mol. Cell. Biol.">
        <title>A single domain of yeast poly(A)-binding protein is necessary and sufficient for RNA binding and cell viability.</title>
        <authorList>
            <person name="Sachs A.B."/>
            <person name="Davis R.W."/>
            <person name="Kornberg R.D."/>
        </authorList>
    </citation>
    <scope>RNA-BINDING</scope>
</reference>
<reference key="8">
    <citation type="journal article" date="1989" name="Cell">
        <title>The poly(A) binding protein is required for poly(A) shortening and 60S ribosomal subunit-dependent translation initiation.</title>
        <authorList>
            <person name="Sachs A.B."/>
            <person name="Davis R.W."/>
        </authorList>
    </citation>
    <scope>FUNCTION IN TRANSLATION INITIATION</scope>
</reference>
<reference key="9">
    <citation type="journal article" date="1989" name="Mol. Cell. Biol.">
        <title>The poly(A)-poly(A)-binding protein complex is a major determinant of mRNA stability in vitro.</title>
        <authorList>
            <person name="Bernstein P."/>
            <person name="Peltz S.W."/>
            <person name="Ross J."/>
        </authorList>
    </citation>
    <scope>FUNCTION IN MRNA STABILIZATION</scope>
</reference>
<reference key="10">
    <citation type="journal article" date="1991" name="Mol. Cell. Biol.">
        <title>The multiple RNA-binding domains of the mRNA poly(A)-binding protein have different RNA-binding activities.</title>
        <authorList>
            <person name="Burd C.G."/>
            <person name="Matunis E.L."/>
            <person name="Dreyfuss G."/>
        </authorList>
    </citation>
    <scope>RNA-BINDING</scope>
    <scope>DOMAINS</scope>
</reference>
<reference key="11">
    <citation type="journal article" date="1993" name="Mol. Cell. Biol.">
        <title>PUB1 is a major nuclear and cytoplasmic polyadenylated RNA-binding protein in Saccharomyces cerevisiae.</title>
        <authorList>
            <person name="Anderson J.T."/>
            <person name="Paddy M.R."/>
            <person name="Swanson M.S."/>
        </authorList>
    </citation>
    <scope>SUBCELLULAR LOCATION</scope>
</reference>
<reference key="12">
    <citation type="journal article" date="1995" name="Genes Dev.">
        <title>Multiple functions for the poly(A)-binding protein in mRNA decapping and deadenylation in yeast.</title>
        <authorList>
            <person name="Caponigro G."/>
            <person name="Parker R."/>
        </authorList>
    </citation>
    <scope>FUNCTION</scope>
</reference>
<reference key="13">
    <citation type="journal article" date="1996" name="EMBO J.">
        <title>Association of the yeast poly(A) tail binding protein with translation initiation factor eIF-4G.</title>
        <authorList>
            <person name="Tarun S.Z. Jr."/>
            <person name="Sachs A.B."/>
        </authorList>
    </citation>
    <scope>INTERACTION WITH TIF4632</scope>
</reference>
<reference key="14">
    <citation type="journal article" date="1997" name="Electrophoresis">
        <title>Proteome studies of Saccharomyces cerevisiae: identification and characterization of abundant proteins.</title>
        <authorList>
            <person name="Garrels J.I."/>
            <person name="McLaughlin C.S."/>
            <person name="Warner J.R."/>
            <person name="Futcher B."/>
            <person name="Latter G.I."/>
            <person name="Kobayashi R."/>
            <person name="Schwender B."/>
            <person name="Volpe T."/>
            <person name="Anderson D.S."/>
            <person name="Mesquita-Fuentes R."/>
            <person name="Payne W.E."/>
        </authorList>
    </citation>
    <scope>ACETYLATION AT ALA-2</scope>
</reference>
<reference key="15">
    <citation type="journal article" date="1997" name="J. Mol. Biol.">
        <title>Differential effects of aromatic and charged residue substitutions in the RNA binding domains of the yeast poly(A)-binding protein.</title>
        <authorList>
            <person name="Deardorff J.A."/>
            <person name="Sachs A.B."/>
        </authorList>
    </citation>
    <scope>RNA-BINDING</scope>
    <scope>MUTAGENESIS OF LEU-79; TYR-83; LYS-166; PHE-170; LYS-259; PHE-263; LYS-362 AND PHE-366</scope>
</reference>
<reference key="16">
    <citation type="journal article" date="1997" name="Mol. Cell. Biol.">
        <title>Yeast Pab1 interacts with Rna15 and participates in the control of the poly(A) tail length in vitro.</title>
        <authorList>
            <person name="Amrani N."/>
            <person name="Minet M."/>
            <person name="Le Gouar M."/>
            <person name="Lacroute F."/>
            <person name="Wyers F."/>
        </authorList>
    </citation>
    <scope>FUNCTION IN MRNA MATURATION</scope>
    <scope>INTERACTION WITH RNA15</scope>
</reference>
<reference key="17">
    <citation type="journal article" date="1997" name="Proc. Natl. Acad. Sci. U.S.A.">
        <title>The major yeast poly(A)-binding protein is associated with cleavage factor IA and functions in premessenger RNA 3'-end formation.</title>
        <authorList>
            <person name="Minvielle-Sebastia L."/>
            <person name="Preker P.J."/>
            <person name="Wiederkehr T."/>
            <person name="Strahm Y."/>
            <person name="Keller W."/>
        </authorList>
    </citation>
    <scope>FUNCTION IN MRNA MATURATION</scope>
</reference>
<reference key="18">
    <citation type="journal article" date="1997" name="Proc. Natl. Acad. Sci. U.S.A.">
        <title>Translation initiation factor eIF4G mediates in vitro poly(A) tail-dependent translation.</title>
        <authorList>
            <person name="Tarun S.Z. Jr."/>
            <person name="Wells S.E."/>
            <person name="Deardorff J.A."/>
            <person name="Sachs A.B."/>
        </authorList>
    </citation>
    <scope>INTERACTION WITH TIF4631 AND TIF4632</scope>
</reference>
<reference key="19">
    <citation type="journal article" date="1998" name="Genes Dev.">
        <title>mRNA stabilization by poly(A) binding protein is independent of poly(A) and requires translation.</title>
        <authorList>
            <person name="Coller J.M."/>
            <person name="Gray N.K."/>
            <person name="Wickens M.P."/>
        </authorList>
    </citation>
    <scope>FUNCTION IN MRNA STABILITY</scope>
</reference>
<reference key="20">
    <citation type="journal article" date="1998" name="Mol. Cell">
        <title>Circularization of mRNA by eukaryotic translation initiation factors.</title>
        <authorList>
            <person name="Wells S.E."/>
            <person name="Hillner P.E."/>
            <person name="Vale R.D."/>
            <person name="Sachs A.B."/>
        </authorList>
    </citation>
    <scope>INTERACTION WITH TIF4631</scope>
    <scope>ATOMIC FORCE MICROSCOPY OF CIRCULAR MRNP STRUCTURE</scope>
</reference>
<reference key="21">
    <citation type="journal article" date="1998" name="Mol. Cell. Biol.">
        <title>RNA recognition motif 2 of yeast Pab1p is required for its functional interaction with eukaryotic translation initiation factor 4G.</title>
        <authorList>
            <person name="Kessler S.H."/>
            <person name="Sachs A.B."/>
        </authorList>
    </citation>
    <scope>INTERACTION WITH TIF4632</scope>
    <scope>MUTAGENESIS OF TYR-83 AND PHE-170</scope>
</reference>
<reference key="22">
    <citation type="journal article" date="1998" name="Mol. Cell. Biol.">
        <title>Pbp1p, a factor interacting with Saccharomyces cerevisiae poly(A)-binding protein, regulates polyadenylation.</title>
        <authorList>
            <person name="Mangus D.A."/>
            <person name="Amrani N."/>
            <person name="Jacobson A."/>
        </authorList>
    </citation>
    <scope>INTERACTION WITH PBP1</scope>
</reference>
<reference key="23">
    <citation type="journal article" date="1999" name="EMBO J.">
        <title>The yeast poly(A)-binding protein Pab1p stimulates in vitro poly(A)-dependent and cap-dependent translation by distinct mechanisms.</title>
        <authorList>
            <person name="Otero L.J."/>
            <person name="Ashe M.P."/>
            <person name="Sachs A.B."/>
        </authorList>
    </citation>
    <scope>FUNCTION IN TRANSLATION STIMULATION</scope>
    <scope>MUTAGENESIS OF 134-HIS--ASP-136; VAL-148; ASP-151; 157-ILE--THR-159; 175-GLU--GLY-177; 180-LYS-GLU-181; 184-ASP--LEU-186; 193-GLY--TYR-197 AND 199-ALA--LEU-202</scope>
    <scope>INTERACTION WITH TIF4631 AND TIF4632</scope>
</reference>
<reference key="24">
    <citation type="journal article" date="2000" name="EMBO J.">
        <title>The eukaryotic mRNA decapping protein Dcp1 interacts physically and functionally with the eIF4F translation initiation complex.</title>
        <authorList>
            <person name="Vilela C."/>
            <person name="Velasco C."/>
            <person name="Ptushkina M."/>
            <person name="McCarthy J.E.G."/>
        </authorList>
    </citation>
    <scope>INTERACTION WITH DCP1 AND TIF4631</scope>
</reference>
<reference key="25">
    <citation type="journal article" date="2001" name="J. Biol. Chem.">
        <title>The yeast hsp70 homologue Ssa is required for translation and interacts with Sis1 and Pab1 on translating ribosomes.</title>
        <authorList>
            <person name="Horton L.E."/>
            <person name="James P."/>
            <person name="Craig E.A."/>
            <person name="Hensold J.O."/>
        </authorList>
    </citation>
    <scope>INTERACTION WITH SSA1</scope>
</reference>
<reference key="26">
    <citation type="journal article" date="2001" name="Mol. Cell">
        <title>Targeting an mRNA for decapping: displacement of translation factors and association of the Lsm1p-7p complex on deadenylated yeast mRNAs.</title>
        <authorList>
            <person name="Tharun S."/>
            <person name="Parker R."/>
        </authorList>
    </citation>
    <scope>FUNCTION IN MRNA DECAY</scope>
    <scope>INTERACTION WITH PAT1</scope>
</reference>
<reference key="27">
    <citation type="journal article" date="2002" name="EMBO J.">
        <title>Ccr4p is the catalytic subunit of a Ccr4p/Pop2p/Notp mRNA deadenylase complex in Saccharomyces cerevisiae.</title>
        <authorList>
            <person name="Tucker M."/>
            <person name="Staples R.R."/>
            <person name="Valencia-Sanchez M.A."/>
            <person name="Muhlrad D."/>
            <person name="Parker R."/>
        </authorList>
    </citation>
    <scope>FUNCTION IN REGULATION OF CCR4-NOT</scope>
</reference>
<reference key="28">
    <citation type="journal article" date="2002" name="Mol. Cell. Biol.">
        <title>Poly(A)-binding protein acts in translation termination via eukaryotic release factor 3 interaction and does not influence [PSI(+)] propagation.</title>
        <authorList>
            <person name="Cosson B."/>
            <person name="Couturier A."/>
            <person name="Chabelskaya S."/>
            <person name="Kiktev D."/>
            <person name="Inge-Vechtomov S.G."/>
            <person name="Philippe M."/>
            <person name="Zhouravleva G."/>
        </authorList>
    </citation>
    <scope>INTERACTION WITH SUP35</scope>
</reference>
<reference key="29">
    <citation type="journal article" date="2003" name="J. Biol. Chem.">
        <title>Translation termination factor eRF3 mediates mRNA decay through the regulation of deadenylation.</title>
        <authorList>
            <person name="Hosoda N."/>
            <person name="Kobayashi T."/>
            <person name="Uchida N."/>
            <person name="Funakoshi Y."/>
            <person name="Kikuchi Y."/>
            <person name="Hoshino S."/>
            <person name="Katada T."/>
        </authorList>
    </citation>
    <scope>FUNCTION IN MRNA DECAY</scope>
    <scope>INTERACTION WITH SUP35</scope>
</reference>
<reference key="30">
    <citation type="journal article" date="2003" name="Nature">
        <title>Global analysis of protein expression in yeast.</title>
        <authorList>
            <person name="Ghaemmaghami S."/>
            <person name="Huh W.-K."/>
            <person name="Bower K."/>
            <person name="Howson R.W."/>
            <person name="Belle A."/>
            <person name="Dephoure N."/>
            <person name="O'Shea E.K."/>
            <person name="Weissman J.S."/>
        </authorList>
    </citation>
    <scope>LEVEL OF PROTEIN EXPRESSION [LARGE SCALE ANALYSIS]</scope>
</reference>
<reference key="31">
    <citation type="journal article" date="2004" name="J. Biol. Chem.">
        <title>The GTP-binding release factor eRF3 as a key mediator coupling translation termination to mRNA decay.</title>
        <authorList>
            <person name="Kobayashi T."/>
            <person name="Funakoshi Y."/>
            <person name="Hoshino S."/>
            <person name="Katada T."/>
        </authorList>
    </citation>
    <scope>INTERACTION WITH SUP35</scope>
</reference>
<reference key="32">
    <citation type="journal article" date="2004" name="Mol. Biol. Cell">
        <title>Arf1p provides an unexpected link between COPI vesicles and mRNA in Saccharomyces cerevisiae.</title>
        <authorList>
            <person name="Trautwein M."/>
            <person name="Dengjel J."/>
            <person name="Schirle M."/>
            <person name="Spang A."/>
        </authorList>
    </citation>
    <scope>FUNCTION IN MRNA TRANSPORT</scope>
    <scope>INTERACTION WITH ARF1</scope>
</reference>
<reference key="33">
    <citation type="journal article" date="2004" name="Mol. Cell. Biol.">
        <title>Positive and negative regulation of poly(A) nuclease.</title>
        <authorList>
            <person name="Mangus D.A."/>
            <person name="Evans M.C."/>
            <person name="Agrin N.S."/>
            <person name="Smith M.M."/>
            <person name="Gongidi P."/>
            <person name="Jacobson A."/>
        </authorList>
    </citation>
    <scope>FUNCTION IN PAN REGULATION</scope>
    <scope>INTERACTION WITH PAN3 AND PBP1</scope>
</reference>
<reference key="34">
    <citation type="journal article" date="2004" name="Nature">
        <title>A faux 3'-UTR promotes aberrant termination and triggers nonsense-mediated mRNA decay.</title>
        <authorList>
            <person name="Amrani N."/>
            <person name="Ganesan R."/>
            <person name="Kervestin S."/>
            <person name="Mangus D.A."/>
            <person name="Ghosh S."/>
            <person name="Jacobson A."/>
        </authorList>
    </citation>
    <scope>INTERACTION WITH SUP35</scope>
</reference>
<reference key="35">
    <citation type="journal article" date="2005" name="Genes Dev.">
        <title>Yeast poly(A)-binding protein, Pab1, and PAN, a poly(A) nuclease complex recruited by Pab1, connect mRNA biogenesis to export.</title>
        <authorList>
            <person name="Dunn E.F."/>
            <person name="Hammell C.M."/>
            <person name="Hodge C.A."/>
            <person name="Cole C.N."/>
        </authorList>
    </citation>
    <scope>FUNCTION IN MRNA EXPORT</scope>
    <scope>SUBCELLULAR LOCATION</scope>
    <scope>MUTAGENESIS OF LEU-12 AND LEU-15</scope>
</reference>
<reference key="36">
    <citation type="journal article" date="2005" name="RNA">
        <title>Yeast poly(A)-binding protein Pab1 shuttles between the nucleus and the cytoplasm and functions in mRNA export.</title>
        <authorList>
            <person name="Brune C."/>
            <person name="Munchel S.E."/>
            <person name="Fischer N."/>
            <person name="Podtelejnikov A.V."/>
            <person name="Weis K."/>
        </authorList>
    </citation>
    <scope>FUNCTION IN MRNA EXPORT</scope>
    <scope>SUBCELLULAR LOCATION</scope>
    <scope>INTERACTION WITH CRM1 AND SXM1</scope>
</reference>
<reference key="37">
    <citation type="journal article" date="2006" name="Mol. Cell. Biol.">
        <title>Tpa1p is part of an mRNP complex that influences translation termination, mRNA deadenylation, and mRNA turnover in Saccharomyces cerevisiae.</title>
        <authorList>
            <person name="Keeling K.M."/>
            <person name="Salas-Marco J."/>
            <person name="Osherovich L.Z."/>
            <person name="Bedwell D.M."/>
        </authorList>
    </citation>
    <scope>INTERACTION WITH TPA1</scope>
</reference>
<reference key="38">
    <citation type="journal article" date="2008" name="Mol. Cell. Proteomics">
        <title>A multidimensional chromatography technology for in-depth phosphoproteome analysis.</title>
        <authorList>
            <person name="Albuquerque C.P."/>
            <person name="Smolka M.B."/>
            <person name="Payne S.H."/>
            <person name="Bafna V."/>
            <person name="Eng J."/>
            <person name="Zhou H."/>
        </authorList>
    </citation>
    <scope>PHOSPHORYLATION [LARGE SCALE ANALYSIS] AT SER-249</scope>
    <scope>IDENTIFICATION BY MASS SPECTROMETRY [LARGE SCALE ANALYSIS]</scope>
</reference>
<reference key="39">
    <citation type="journal article" date="2009" name="Science">
        <title>Global analysis of Cdk1 substrate phosphorylation sites provides insights into evolution.</title>
        <authorList>
            <person name="Holt L.J."/>
            <person name="Tuch B.B."/>
            <person name="Villen J."/>
            <person name="Johnson A.D."/>
            <person name="Gygi S.P."/>
            <person name="Morgan D.O."/>
        </authorList>
    </citation>
    <scope>PHOSPHORYLATION [LARGE SCALE ANALYSIS] AT SER-332 AND SER-405</scope>
    <scope>IDENTIFICATION BY MASS SPECTROMETRY [LARGE SCALE ANALYSIS]</scope>
</reference>
<reference key="40">
    <citation type="journal article" date="2012" name="Proteomics">
        <title>Sites of ubiquitin attachment in Saccharomyces cerevisiae.</title>
        <authorList>
            <person name="Starita L.M."/>
            <person name="Lo R.S."/>
            <person name="Eng J.K."/>
            <person name="von Haller P.D."/>
            <person name="Fields S."/>
        </authorList>
    </citation>
    <scope>UBIQUITINATION [LARGE SCALE ANALYSIS] AT LYS-7 AND LYS-337</scope>
    <scope>IDENTIFICATION BY MASS SPECTROMETRY [LARGE SCALE ANALYSIS]</scope>
</reference>
<reference key="41">
    <citation type="journal article" date="2013" name="J. Proteome Res.">
        <title>Analysis of the proteome of Saccharomyces cerevisiae for methylarginine.</title>
        <authorList>
            <person name="Low J.K."/>
            <person name="Hart-Smith G."/>
            <person name="Erce M.A."/>
            <person name="Wilkins M.R."/>
        </authorList>
    </citation>
    <scope>METHYLATION AT ARG-107</scope>
</reference>
<reference key="42">
    <citation type="journal article" date="2002" name="J. Biol. Chem.">
        <title>Solution structure of the orphan PABC domain from Saccharomyces cerevisiae poly(A)-binding protein.</title>
        <authorList>
            <person name="Kozlov G."/>
            <person name="Siddiqui N."/>
            <person name="Coillet-Matillon S."/>
            <person name="Trempe J.-F."/>
            <person name="Ekiel I."/>
            <person name="Sprules T."/>
            <person name="Gehring K."/>
        </authorList>
    </citation>
    <scope>STRUCTURE BY NMR OF 489-577</scope>
</reference>
<evidence type="ECO:0000255" key="1"/>
<evidence type="ECO:0000255" key="2">
    <source>
        <dbReference type="PROSITE-ProRule" id="PRU00176"/>
    </source>
</evidence>
<evidence type="ECO:0000255" key="3">
    <source>
        <dbReference type="PROSITE-ProRule" id="PRU00641"/>
    </source>
</evidence>
<evidence type="ECO:0000256" key="4">
    <source>
        <dbReference type="SAM" id="MobiDB-lite"/>
    </source>
</evidence>
<evidence type="ECO:0000269" key="5">
    <source>
    </source>
</evidence>
<evidence type="ECO:0000269" key="6">
    <source>
    </source>
</evidence>
<evidence type="ECO:0000269" key="7">
    <source>
    </source>
</evidence>
<evidence type="ECO:0000269" key="8">
    <source>
    </source>
</evidence>
<evidence type="ECO:0000269" key="9">
    <source>
    </source>
</evidence>
<evidence type="ECO:0000269" key="10">
    <source>
    </source>
</evidence>
<evidence type="ECO:0000269" key="11">
    <source>
    </source>
</evidence>
<evidence type="ECO:0000269" key="12">
    <source>
    </source>
</evidence>
<evidence type="ECO:0000269" key="13">
    <source>
    </source>
</evidence>
<evidence type="ECO:0000269" key="14">
    <source>
    </source>
</evidence>
<evidence type="ECO:0000269" key="15">
    <source>
    </source>
</evidence>
<evidence type="ECO:0000269" key="16">
    <source>
    </source>
</evidence>
<evidence type="ECO:0000269" key="17">
    <source>
    </source>
</evidence>
<evidence type="ECO:0000269" key="18">
    <source>
    </source>
</evidence>
<evidence type="ECO:0000269" key="19">
    <source>
    </source>
</evidence>
<evidence type="ECO:0000269" key="20">
    <source>
    </source>
</evidence>
<evidence type="ECO:0000269" key="21">
    <source>
    </source>
</evidence>
<evidence type="ECO:0000269" key="22">
    <source>
    </source>
</evidence>
<evidence type="ECO:0000269" key="23">
    <source>
    </source>
</evidence>
<evidence type="ECO:0000269" key="24">
    <source>
    </source>
</evidence>
<evidence type="ECO:0000269" key="25">
    <source>
    </source>
</evidence>
<evidence type="ECO:0000269" key="26">
    <source>
    </source>
</evidence>
<evidence type="ECO:0000269" key="27">
    <source>
    </source>
</evidence>
<evidence type="ECO:0000269" key="28">
    <source>
    </source>
</evidence>
<evidence type="ECO:0000269" key="29">
    <source>
    </source>
</evidence>
<evidence type="ECO:0000269" key="30">
    <source>
    </source>
</evidence>
<evidence type="ECO:0000269" key="31">
    <source>
    </source>
</evidence>
<evidence type="ECO:0000269" key="32">
    <source>
    </source>
</evidence>
<evidence type="ECO:0000269" key="33">
    <source>
    </source>
</evidence>
<evidence type="ECO:0000269" key="34">
    <source>
    </source>
</evidence>
<evidence type="ECO:0000305" key="35"/>
<evidence type="ECO:0007744" key="36">
    <source>
    </source>
</evidence>
<evidence type="ECO:0007744" key="37">
    <source>
    </source>
</evidence>
<evidence type="ECO:0007744" key="38">
    <source>
    </source>
</evidence>
<evidence type="ECO:0007829" key="39">
    <source>
        <dbReference type="PDB" id="1IFW"/>
    </source>
</evidence>
<comment type="function">
    <text evidence="5 8 9 11 13 15 17 18 22 23 24 27 28 33">Binds the poly(A) tail of mRNA. Appears to be an important mediator of the multiple roles of the poly(A) tail in mRNA biogenesis, stability and translation. In the nucleus, interacts with the nuclear cleavage factor IA (CFIA), which is required for both mRNA cleavage and polyadenylation. Is also required for efficient mRNA export to the cytoplasm. Acts in concert with a poly(A)-specific nuclease (PAN) to affect poly(A) tail shortening, which may occur concomitantly with either nucleocytoplasmic mRNA transport or translational initiation. Regulates PAN activity via interaction with the stimulator PAN3 or the inhibitor PBP1. In the cytoplasm, affects both translation and mRNA decay. Stimulates translation by interaction with translation initiation factor eIF4G, a subunit of the cap-binding complex eIF4F, bringing the 5'- and 3'-ends of the mRNA in proximity. The formation of this circular mRNP structure appears to be critical for the synergistic effects of the cap and the poly(A) tail in facilitating translation initiation, recycling of ribosomes, and mRNA stability. Also regulates translation termination by recruiting eukaryotic release factor 3 (eRF3). Interaction with eRF3 is also required for regulation of normal mRNA decay through translation termination-coupled poly(A) shortening, probably mediated by PAN. Loss of PAB1 from the mRNP after deadenylation triggers mRNA degradation. Inhibits the major cytoplasmic mRNA deadenylase CCR4-NOT complex. Is also associated peripherally with COPI vesicles through its interaction with ARF1, and this is required for correct localization of the asymmetrically distributed ASH1 mRNA.</text>
</comment>
<comment type="subunit">
    <text evidence="5 6 7 8 10 11 13 14 15 16 18 20 25 27 29 31 32 34">Binds to poly(A) mRNA to form a periodic structure with a packing density of one molecule per 25 adenylate residues. Interacts with the nuclear export factor CRM1 and with the importin SXM1. Interacts with RNA15, a component of the cleavage factor IA (CFIA) complex. Interacts with translation initiation factor eIF4G (TIF4631 or TIF4632) and release factor eRF3 (SUP35). Interacts with the PAB-dependent poly(A)-nuclease (PAN) complex regulatory subunit PAN3. Interacts with ARF1, DCP1, PBP1, the Hsp70 chaperone SSA1, and TPA1. Interacts with PAT1 in an RNA-dependent manner.</text>
</comment>
<comment type="interaction">
    <interactant intactId="EBI-12823">
        <id>P04147</id>
    </interactant>
    <interactant intactId="EBI-29244">
        <id>P53849</id>
        <label>GIS2</label>
    </interactant>
    <organismsDiffer>false</organismsDiffer>
    <experiments>2</experiments>
</comment>
<comment type="interaction">
    <interactant intactId="EBI-12823">
        <id>P04147</id>
    </interactant>
    <interactant intactId="EBI-12895">
        <id>P36102</id>
        <label>PAN3</label>
    </interactant>
    <organismsDiffer>false</organismsDiffer>
    <experiments>6</experiments>
</comment>
<comment type="interaction">
    <interactant intactId="EBI-12823">
        <id>P04147</id>
    </interactant>
    <interactant intactId="EBI-9002">
        <id>P39935</id>
        <label>TIF4631</label>
    </interactant>
    <organismsDiffer>false</organismsDiffer>
    <experiments>17</experiments>
</comment>
<comment type="interaction">
    <interactant intactId="EBI-12823">
        <id>P04147</id>
    </interactant>
    <interactant intactId="EBI-9006">
        <id>P39936</id>
        <label>TIF4632</label>
    </interactant>
    <organismsDiffer>false</organismsDiffer>
    <experiments>3</experiments>
</comment>
<comment type="subcellular location">
    <subcellularLocation>
        <location>Cytoplasm</location>
    </subcellularLocation>
    <subcellularLocation>
        <location>Nucleus</location>
    </subcellularLocation>
    <text>Predominantly cytoplasmic. Rapidly shuttles between the nucleus and the cytoplasm. Can be exported from the nucleus through at least 2 distinct pathways, the main being dependent on the exportin CRM1, and the second requiring MEX67 and ongoing mRNA export. Import is mediated by the importin SXM1.</text>
</comment>
<comment type="domain">
    <text evidence="19">RNA recognition motifs (RRMs) 1 and 2 bind specifically to the poly(A) tail, whereas RRMs 3 and 4 bind non-specifically to polypyrimidine RNAs and may serve to bind to a different part of the messenger or to other RNAs. RRM 2 also mediates interaction with eIF-4G.</text>
</comment>
<comment type="miscellaneous">
    <text evidence="12">Present with 198000 molecules/cell in log phase SD medium.</text>
</comment>
<comment type="similarity">
    <text evidence="35">Belongs to the polyadenylate-binding protein type-1 family.</text>
</comment>
<keyword id="KW-0002">3D-structure</keyword>
<keyword id="KW-0007">Acetylation</keyword>
<keyword id="KW-0963">Cytoplasm</keyword>
<keyword id="KW-0903">Direct protein sequencing</keyword>
<keyword id="KW-1017">Isopeptide bond</keyword>
<keyword id="KW-0488">Methylation</keyword>
<keyword id="KW-0507">mRNA processing</keyword>
<keyword id="KW-0509">mRNA transport</keyword>
<keyword id="KW-0539">Nucleus</keyword>
<keyword id="KW-0597">Phosphoprotein</keyword>
<keyword id="KW-1185">Reference proteome</keyword>
<keyword id="KW-0677">Repeat</keyword>
<keyword id="KW-0694">RNA-binding</keyword>
<keyword id="KW-0810">Translation regulation</keyword>
<keyword id="KW-0813">Transport</keyword>
<keyword id="KW-0832">Ubl conjugation</keyword>
<feature type="initiator methionine" description="Removed" evidence="30">
    <location>
        <position position="1"/>
    </location>
</feature>
<feature type="chain" id="PRO_0000081720" description="Polyadenylate-binding protein, cytoplasmic and nuclear">
    <location>
        <begin position="2"/>
        <end position="577"/>
    </location>
</feature>
<feature type="domain" description="RRM 1" evidence="2">
    <location>
        <begin position="38"/>
        <end position="116"/>
    </location>
</feature>
<feature type="domain" description="RRM 2" evidence="2">
    <location>
        <begin position="126"/>
        <end position="203"/>
    </location>
</feature>
<feature type="domain" description="RRM 3" evidence="2">
    <location>
        <begin position="219"/>
        <end position="296"/>
    </location>
</feature>
<feature type="domain" description="RRM 4" evidence="2">
    <location>
        <begin position="322"/>
        <end position="399"/>
    </location>
</feature>
<feature type="domain" description="PABC" evidence="3">
    <location>
        <begin position="489"/>
        <end position="568"/>
    </location>
</feature>
<feature type="region of interest" description="Disordered" evidence="4">
    <location>
        <begin position="1"/>
        <end position="36"/>
    </location>
</feature>
<feature type="region of interest" description="Required and sufficient for nuclear export" evidence="1">
    <location>
        <begin position="9"/>
        <end position="61"/>
    </location>
</feature>
<feature type="region of interest" description="Required and sufficient for nuclear import" evidence="1">
    <location>
        <begin position="281"/>
        <end position="317"/>
    </location>
</feature>
<feature type="region of interest" description="Interaction with SUP35">
    <location>
        <begin position="473"/>
        <end position="577"/>
    </location>
</feature>
<feature type="short sequence motif" description="Nuclear export signal" evidence="1">
    <location>
        <begin position="12"/>
        <end position="17"/>
    </location>
</feature>
<feature type="compositionally biased region" description="Basic and acidic residues" evidence="4">
    <location>
        <begin position="1"/>
        <end position="10"/>
    </location>
</feature>
<feature type="compositionally biased region" description="Polar residues" evidence="4">
    <location>
        <begin position="11"/>
        <end position="27"/>
    </location>
</feature>
<feature type="modified residue" description="N-acetylalanine" evidence="30">
    <location>
        <position position="2"/>
    </location>
</feature>
<feature type="modified residue" description="Omega-N-methylarginine" evidence="21">
    <location>
        <position position="107"/>
    </location>
</feature>
<feature type="modified residue" description="Phosphoserine" evidence="36">
    <location>
        <position position="249"/>
    </location>
</feature>
<feature type="modified residue" description="Phosphoserine" evidence="37">
    <location>
        <position position="332"/>
    </location>
</feature>
<feature type="modified residue" description="Phosphoserine" evidence="37">
    <location>
        <position position="405"/>
    </location>
</feature>
<feature type="cross-link" description="Glycyl lysine isopeptide (Lys-Gly) (interchain with G-Cter in ubiquitin)" evidence="38">
    <location>
        <position position="7"/>
    </location>
</feature>
<feature type="cross-link" description="Glycyl lysine isopeptide (Lys-Gly) (interchain with G-Cter in ubiquitin)" evidence="38">
    <location>
        <position position="337"/>
    </location>
</feature>
<feature type="mutagenesis site" description="Impairs nuclear export; when associated with A-15." evidence="17">
    <original>L</original>
    <variation>A</variation>
    <location>
        <position position="12"/>
    </location>
</feature>
<feature type="mutagenesis site" description="Impairs nuclear export; when associated with A-12." evidence="17">
    <original>L</original>
    <variation>A</variation>
    <location>
        <position position="15"/>
    </location>
</feature>
<feature type="mutagenesis site" description="In PAB1-14; fails to bind poly(U), but not poly(A) RNA; when associated with Q-166; Q-259 and Q-362." evidence="26">
    <original>L</original>
    <variation>A</variation>
    <location>
        <position position="79"/>
    </location>
</feature>
<feature type="mutagenesis site" description="In PAB1-16; reduces affinity for oligo(A) about 100-fold, impairs poly(A)-dependent translation, but still interacts with eIF4G; when associated with V-170. In PAB1-15; fails to bind RNA; when associated with V-170; V-263 and V-366." evidence="26 31">
    <original>Y</original>
    <variation>V</variation>
    <location>
        <position position="83"/>
    </location>
</feature>
<feature type="mutagenesis site" description="In PAB1-134." evidence="5">
    <original>HPD</original>
    <variation>DKS</variation>
    <location>
        <begin position="134"/>
        <end position="136"/>
    </location>
</feature>
<feature type="mutagenesis site" description="In PAB1-148; greatly reduces poly(A)-dependent translation and moderately reduces stimulation of cap-dependent translation in vitro; when associated with N-151." evidence="5">
    <original>V</original>
    <variation>A</variation>
    <location>
        <position position="148"/>
    </location>
</feature>
<feature type="mutagenesis site" description="In PAB1-148; greatly reduces poly(A)-dependent translation and moderately reduces stimulation of cap-dependent translation in vitro; when associated with A-148." evidence="5">
    <original>D</original>
    <variation>N</variation>
    <location>
        <position position="151"/>
    </location>
</feature>
<feature type="mutagenesis site" description="In PAB1-157; greatly reduces poly(A)-dependent translation and stimulation of cap-dependent translation in vitro." evidence="5">
    <original>IAT</original>
    <variation>VVC</variation>
    <location>
        <begin position="157"/>
        <end position="159"/>
    </location>
</feature>
<feature type="mutagenesis site" description="In PAB1-14; fails to bind poly(U), but not poly(A) RNA; when associated with A-79; Q-259 and Q-362." evidence="26">
    <original>K</original>
    <variation>Q</variation>
    <location>
        <position position="166"/>
    </location>
</feature>
<feature type="mutagenesis site" description="In PAB1-6; selectively reduces poly(A) RNA binding. In PAB1-16; reduces affinity for oligo(A) about 100-fold, impairs poly(A)-dependent translation, but still interacts with eIF4G; when associated with V-83. In PAB1-15; fails to bind RNA; when associated with V-83; V-263 and V-366." evidence="26 31">
    <original>F</original>
    <variation>V</variation>
    <location>
        <position position="170"/>
    </location>
</feature>
<feature type="mutagenesis site" description="In PAB1-175; greatly reduces poly(A)-dependent translation and stimulation of cap-dependent translation in vitro." evidence="5">
    <original>EEG</original>
    <variation>TQE</variation>
    <location>
        <begin position="175"/>
        <end position="177"/>
    </location>
</feature>
<feature type="mutagenesis site" description="In PAB1-180; abolishes poly(A)-dependent translation and greatly reduces stimulation of cap-dependent translation in vitro. Impairs interaction with eIF4G." evidence="5">
    <original>KE</original>
    <variation>ER</variation>
    <location>
        <begin position="180"/>
        <end position="181"/>
    </location>
</feature>
<feature type="mutagenesis site" description="In PAB1-184; abolishes poly(A)-dependent translation and moderately reduces stimulation of cap-dependent translation in vitro. Impairs interaction with eIF4G." evidence="5">
    <original>DAL</original>
    <variation>EKM</variation>
    <location>
        <begin position="184"/>
        <end position="186"/>
    </location>
</feature>
<feature type="mutagenesis site" description="In PAB1-193; moderately reduces stimulation of cap-dependent translation in vitro." evidence="5">
    <original>GQEIY</original>
    <variation>DRKVF</variation>
    <location>
        <begin position="193"/>
        <end position="197"/>
    </location>
</feature>
<feature type="mutagenesis site" description="In PAB1-199; moderately reduces poly(A)-dependent translation and stimulation of cap-dependent translation in vitro." evidence="5">
    <original>APHL</original>
    <variation>GRFK</variation>
    <location>
        <begin position="199"/>
        <end position="202"/>
    </location>
</feature>
<feature type="mutagenesis site" description="In PAB1-14; fails to bind poly(U), but not poly(A) RNA; when associated with A-79; Q-166 and Q-362." evidence="26">
    <original>K</original>
    <variation>Q</variation>
    <location>
        <position position="259"/>
    </location>
</feature>
<feature type="mutagenesis site" description="In PAB1-7. In PAB1-15; fails to bind RNA; when associated with V-83; V-170 and V-366." evidence="26">
    <original>F</original>
    <variation>V</variation>
    <location>
        <position position="263"/>
    </location>
</feature>
<feature type="mutagenesis site" description="In PAB1-14; fails to bind poly(U), but not poly(A) RNA; when associated with A-79; Q-166 and Q-259." evidence="26">
    <original>K</original>
    <variation>Q</variation>
    <location>
        <position position="362"/>
    </location>
</feature>
<feature type="mutagenesis site" description="In PAB1-8; selectively reduces poly(U) RNA binding. In PAB1-15; fails to bind RNA; when associated with V-83; V-170 and V-263." evidence="26">
    <original>F</original>
    <variation>V</variation>
    <location>
        <position position="366"/>
    </location>
</feature>
<feature type="sequence conflict" description="In Ref. 1; AAA34838." evidence="35" ref="1">
    <original>A</original>
    <variation>R</variation>
    <location>
        <position position="426"/>
    </location>
</feature>
<feature type="helix" evidence="39">
    <location>
        <begin position="503"/>
        <end position="517"/>
    </location>
</feature>
<feature type="helix" evidence="39">
    <location>
        <begin position="518"/>
        <end position="520"/>
    </location>
</feature>
<feature type="helix" evidence="39">
    <location>
        <begin position="524"/>
        <end position="534"/>
    </location>
</feature>
<feature type="helix" evidence="39">
    <location>
        <begin position="539"/>
        <end position="546"/>
    </location>
</feature>
<feature type="helix" evidence="39">
    <location>
        <begin position="549"/>
        <end position="568"/>
    </location>
</feature>